<sequence>MQDDLDGIVRHRRRSLSFLQIVTLTMAGLVAFDPAQVLAGHPTTDSELQTAGSPRPPGLEHCVDQEERRVARRLLYISTLDGRLSALDIAKSGKLRWSVPTGPGPLISSSIHRLELTNNGQFVRMIPSLSGGIYKFDGDSIDPIPITAEHLLSSSAKFSDDLVISGGKETRSYGVSVRTGQLLYECSLNGCVNSTEEGLAIDDTIREPDEEDQLEDGEQLRDEAGYIVRHDPLLDDVIIVRRQTQTVRAVESRTGVERWNFSVGQHELDLVRPSECQLQPRDELELAVLDVDIKVVVPEGIICAFSKSEPQTMLWKYKFDHPIVSAWNTNADDELQPIDLFSSAQWLWDQDENDTELPNAPQSPPSIYLGMYDKQLYIQESIRLRQEIMDQTKVYQQLTGDTSLMPRIPWKPISASSKSLVIFRKDQEDPEMIAEGAVAQGGELVPYDDENFAVAAQSVLNASEFVNGNGFYFYTTGDLNGPQECSTQNNPTDLPAITAPTSPTNATSEGTEATGNHSVNDDLGFSLDDIDAPVKVVILSLWFWWKEIVVIAFTSAVILNIFMGQRNQRVEREYLVIERHVPVQTAIEATEASTQALLGPVVPMQRPGNRFSFPPGQANQRTISESTTHSGEHYTSRFQSDFELMQCLGRGGFGVVFEAKNKLDENRYAIKRITLPNKESSRQRVLREARTLASCEHHNIVRYFHSWTETPPTGWQEEEDRKLLAHELSTSIQIETPDDSTMPSLTEQLKEKRQQQLLSWVSDAANSTACSHDFHLPGESSLKNIREEYDYDEEEDSLIEFRSESQSAALRAEEEDDTDDDYEEDEEQQGDHEKRHRSSVSIDIHSASFDLKNINYSQHQLVSNSFQIESVRPKSSGSDDANDDNKARRKPLTLALAQNHNNNQNGSQPTPSSATILNGTVAKPSKVYLYIQMQLCRKESLRDWLRDNRSETRAAHIGDIFHQIVDAVDYVHLKGLIHRDLKPSNIFFSQDGQIKIGDFGLVTDMADIPNLVAKCGDQSGLPSCARHTQQVGTHLYMSPEQLLGQHYDYKVDIYSLGLIFFELHVYFSTEMERIKTLRSLRDGQYPKDFAVNYPQQYDLLQQMLSAQPEQRPQTKQLKSQLRNILQLPHLLSEGQSEQAELAERARRLSRSRTFSSSSEPHQ</sequence>
<name>E2AK3_DROME</name>
<protein>
    <recommendedName>
        <fullName>Eukaryotic translation initiation factor 2-alpha kinase</fullName>
        <ecNumber>2.7.11.1</ecNumber>
    </recommendedName>
    <alternativeName>
        <fullName>PRKR-like endoplasmic reticulum kinase</fullName>
        <shortName>DmPEK</shortName>
        <shortName>PEK</shortName>
        <shortName>PERK</shortName>
    </alternativeName>
</protein>
<accession>Q9NIV1</accession>
<accession>Q8SX61</accession>
<accession>Q9VNB8</accession>
<keyword id="KW-0067">ATP-binding</keyword>
<keyword id="KW-0256">Endoplasmic reticulum</keyword>
<keyword id="KW-0325">Glycoprotein</keyword>
<keyword id="KW-0418">Kinase</keyword>
<keyword id="KW-0472">Membrane</keyword>
<keyword id="KW-0547">Nucleotide-binding</keyword>
<keyword id="KW-0597">Phosphoprotein</keyword>
<keyword id="KW-1185">Reference proteome</keyword>
<keyword id="KW-0723">Serine/threonine-protein kinase</keyword>
<keyword id="KW-0732">Signal</keyword>
<keyword id="KW-0346">Stress response</keyword>
<keyword id="KW-0808">Transferase</keyword>
<keyword id="KW-0810">Translation regulation</keyword>
<keyword id="KW-0812">Transmembrane</keyword>
<keyword id="KW-1133">Transmembrane helix</keyword>
<keyword id="KW-0834">Unfolded protein response</keyword>
<gene>
    <name type="primary">PEK</name>
    <name type="synonym">EIF2AK3</name>
    <name type="ORF">CG2087</name>
</gene>
<evidence type="ECO:0000250" key="1"/>
<evidence type="ECO:0000255" key="2"/>
<evidence type="ECO:0000255" key="3">
    <source>
        <dbReference type="PROSITE-ProRule" id="PRU00159"/>
    </source>
</evidence>
<evidence type="ECO:0000255" key="4">
    <source>
        <dbReference type="PROSITE-ProRule" id="PRU10027"/>
    </source>
</evidence>
<evidence type="ECO:0000256" key="5">
    <source>
        <dbReference type="SAM" id="MobiDB-lite"/>
    </source>
</evidence>
<evidence type="ECO:0000269" key="6">
    <source>
    </source>
</evidence>
<evidence type="ECO:0000305" key="7"/>
<organism>
    <name type="scientific">Drosophila melanogaster</name>
    <name type="common">Fruit fly</name>
    <dbReference type="NCBI Taxonomy" id="7227"/>
    <lineage>
        <taxon>Eukaryota</taxon>
        <taxon>Metazoa</taxon>
        <taxon>Ecdysozoa</taxon>
        <taxon>Arthropoda</taxon>
        <taxon>Hexapoda</taxon>
        <taxon>Insecta</taxon>
        <taxon>Pterygota</taxon>
        <taxon>Neoptera</taxon>
        <taxon>Endopterygota</taxon>
        <taxon>Diptera</taxon>
        <taxon>Brachycera</taxon>
        <taxon>Muscomorpha</taxon>
        <taxon>Ephydroidea</taxon>
        <taxon>Drosophilidae</taxon>
        <taxon>Drosophila</taxon>
        <taxon>Sophophora</taxon>
    </lineage>
</organism>
<proteinExistence type="evidence at protein level"/>
<dbReference type="EC" id="2.7.11.1"/>
<dbReference type="EMBL" id="AF193340">
    <property type="protein sequence ID" value="AAF61200.1"/>
    <property type="molecule type" value="mRNA"/>
</dbReference>
<dbReference type="EMBL" id="AJ313085">
    <property type="protein sequence ID" value="CAC85207.1"/>
    <property type="molecule type" value="mRNA"/>
</dbReference>
<dbReference type="EMBL" id="AE014297">
    <property type="protein sequence ID" value="AAF52028.2"/>
    <property type="molecule type" value="Genomic_DNA"/>
</dbReference>
<dbReference type="EMBL" id="AY094831">
    <property type="protein sequence ID" value="AAM11184.1"/>
    <property type="molecule type" value="mRNA"/>
</dbReference>
<dbReference type="RefSeq" id="NP_649538.1">
    <property type="nucleotide sequence ID" value="NM_141281.3"/>
</dbReference>
<dbReference type="SMR" id="Q9NIV1"/>
<dbReference type="BioGRID" id="65862">
    <property type="interactions" value="16"/>
</dbReference>
<dbReference type="DIP" id="DIP-22099N"/>
<dbReference type="FunCoup" id="Q9NIV1">
    <property type="interactions" value="1147"/>
</dbReference>
<dbReference type="IntAct" id="Q9NIV1">
    <property type="interactions" value="1"/>
</dbReference>
<dbReference type="STRING" id="7227.FBpp0078417"/>
<dbReference type="GlyCosmos" id="Q9NIV1">
    <property type="glycosylation" value="6 sites, No reported glycans"/>
</dbReference>
<dbReference type="GlyGen" id="Q9NIV1">
    <property type="glycosylation" value="7 sites"/>
</dbReference>
<dbReference type="iPTMnet" id="Q9NIV1"/>
<dbReference type="PaxDb" id="7227-FBpp0078417"/>
<dbReference type="DNASU" id="40653"/>
<dbReference type="EnsemblMetazoa" id="FBtr0078770">
    <property type="protein sequence ID" value="FBpp0078417"/>
    <property type="gene ID" value="FBgn0037327"/>
</dbReference>
<dbReference type="GeneID" id="40653"/>
<dbReference type="KEGG" id="dme:Dmel_CG2087"/>
<dbReference type="AGR" id="FB:FBgn0037327"/>
<dbReference type="CTD" id="40653"/>
<dbReference type="FlyBase" id="FBgn0037327">
    <property type="gene designation" value="PEK"/>
</dbReference>
<dbReference type="VEuPathDB" id="VectorBase:FBgn0037327"/>
<dbReference type="eggNOG" id="KOG1033">
    <property type="taxonomic scope" value="Eukaryota"/>
</dbReference>
<dbReference type="GeneTree" id="ENSGT00940000163863"/>
<dbReference type="InParanoid" id="Q9NIV1"/>
<dbReference type="OMA" id="CMIEERE"/>
<dbReference type="OrthoDB" id="341578at2759"/>
<dbReference type="PhylomeDB" id="Q9NIV1"/>
<dbReference type="Reactome" id="R-DME-1169408">
    <property type="pathway name" value="ISG15 antiviral mechanism"/>
</dbReference>
<dbReference type="Reactome" id="R-DME-381042">
    <property type="pathway name" value="PERK regulates gene expression"/>
</dbReference>
<dbReference type="Reactome" id="R-DME-9833482">
    <property type="pathway name" value="PKR-mediated signaling"/>
</dbReference>
<dbReference type="SignaLink" id="Q9NIV1"/>
<dbReference type="BioGRID-ORCS" id="40653">
    <property type="hits" value="0 hits in 3 CRISPR screens"/>
</dbReference>
<dbReference type="GenomeRNAi" id="40653"/>
<dbReference type="PRO" id="PR:Q9NIV1"/>
<dbReference type="Proteomes" id="UP000000803">
    <property type="component" value="Chromosome 3R"/>
</dbReference>
<dbReference type="Bgee" id="FBgn0037327">
    <property type="expression patterns" value="Expressed in wing disc and 110 other cell types or tissues"/>
</dbReference>
<dbReference type="ExpressionAtlas" id="Q9NIV1">
    <property type="expression patterns" value="baseline and differential"/>
</dbReference>
<dbReference type="GO" id="GO:0005737">
    <property type="term" value="C:cytoplasm"/>
    <property type="evidence" value="ECO:0000318"/>
    <property type="project" value="GO_Central"/>
</dbReference>
<dbReference type="GO" id="GO:0005783">
    <property type="term" value="C:endoplasmic reticulum"/>
    <property type="evidence" value="ECO:0000314"/>
    <property type="project" value="FlyBase"/>
</dbReference>
<dbReference type="GO" id="GO:0005789">
    <property type="term" value="C:endoplasmic reticulum membrane"/>
    <property type="evidence" value="ECO:0007669"/>
    <property type="project" value="UniProtKB-SubCell"/>
</dbReference>
<dbReference type="GO" id="GO:0005634">
    <property type="term" value="C:nucleus"/>
    <property type="evidence" value="ECO:0000318"/>
    <property type="project" value="GO_Central"/>
</dbReference>
<dbReference type="GO" id="GO:0005524">
    <property type="term" value="F:ATP binding"/>
    <property type="evidence" value="ECO:0007669"/>
    <property type="project" value="UniProtKB-KW"/>
</dbReference>
<dbReference type="GO" id="GO:0004694">
    <property type="term" value="F:eukaryotic translation initiation factor 2alpha kinase activity"/>
    <property type="evidence" value="ECO:0000314"/>
    <property type="project" value="FlyBase"/>
</dbReference>
<dbReference type="GO" id="GO:0106310">
    <property type="term" value="F:protein serine kinase activity"/>
    <property type="evidence" value="ECO:0007669"/>
    <property type="project" value="RHEA"/>
</dbReference>
<dbReference type="GO" id="GO:0017148">
    <property type="term" value="P:negative regulation of translation"/>
    <property type="evidence" value="ECO:0000318"/>
    <property type="project" value="GO_Central"/>
</dbReference>
<dbReference type="GO" id="GO:0036499">
    <property type="term" value="P:PERK-mediated unfolded protein response"/>
    <property type="evidence" value="ECO:0000314"/>
    <property type="project" value="FlyBase"/>
</dbReference>
<dbReference type="GO" id="GO:0010508">
    <property type="term" value="P:positive regulation of autophagy"/>
    <property type="evidence" value="ECO:0000315"/>
    <property type="project" value="FlyBase"/>
</dbReference>
<dbReference type="GO" id="GO:0046330">
    <property type="term" value="P:positive regulation of JNK cascade"/>
    <property type="evidence" value="ECO:0000315"/>
    <property type="project" value="FlyBase"/>
</dbReference>
<dbReference type="GO" id="GO:0010389">
    <property type="term" value="P:regulation of G2/M transition of mitotic cell cycle"/>
    <property type="evidence" value="ECO:0000315"/>
    <property type="project" value="FlyBase"/>
</dbReference>
<dbReference type="GO" id="GO:0006446">
    <property type="term" value="P:regulation of translational initiation"/>
    <property type="evidence" value="ECO:0000318"/>
    <property type="project" value="GO_Central"/>
</dbReference>
<dbReference type="CDD" id="cd09768">
    <property type="entry name" value="Luminal_EIF2AK3"/>
    <property type="match status" value="1"/>
</dbReference>
<dbReference type="FunFam" id="3.30.200.20:FF:000193">
    <property type="entry name" value="Eukaryotic translation initiation factor 2-alpha kinase 3"/>
    <property type="match status" value="1"/>
</dbReference>
<dbReference type="FunFam" id="1.10.510.10:FF:000251">
    <property type="entry name" value="eukaryotic translation initiation factor 2-alpha kinase 3"/>
    <property type="match status" value="1"/>
</dbReference>
<dbReference type="FunFam" id="2.130.10.10:FF:002520">
    <property type="entry name" value="GG11023"/>
    <property type="match status" value="1"/>
</dbReference>
<dbReference type="Gene3D" id="3.30.200.20">
    <property type="entry name" value="Phosphorylase Kinase, domain 1"/>
    <property type="match status" value="1"/>
</dbReference>
<dbReference type="Gene3D" id="1.10.510.10">
    <property type="entry name" value="Transferase(Phosphotransferase) domain 1"/>
    <property type="match status" value="1"/>
</dbReference>
<dbReference type="Gene3D" id="2.130.10.10">
    <property type="entry name" value="YVTN repeat-like/Quinoprotein amine dehydrogenase"/>
    <property type="match status" value="1"/>
</dbReference>
<dbReference type="InterPro" id="IPR050339">
    <property type="entry name" value="CC_SR_Kinase"/>
</dbReference>
<dbReference type="InterPro" id="IPR011009">
    <property type="entry name" value="Kinase-like_dom_sf"/>
</dbReference>
<dbReference type="InterPro" id="IPR018391">
    <property type="entry name" value="PQQ_b-propeller_rpt"/>
</dbReference>
<dbReference type="InterPro" id="IPR000719">
    <property type="entry name" value="Prot_kinase_dom"/>
</dbReference>
<dbReference type="InterPro" id="IPR017441">
    <property type="entry name" value="Protein_kinase_ATP_BS"/>
</dbReference>
<dbReference type="InterPro" id="IPR011047">
    <property type="entry name" value="Quinoprotein_ADH-like_sf"/>
</dbReference>
<dbReference type="InterPro" id="IPR008271">
    <property type="entry name" value="Ser/Thr_kinase_AS"/>
</dbReference>
<dbReference type="InterPro" id="IPR015943">
    <property type="entry name" value="WD40/YVTN_repeat-like_dom_sf"/>
</dbReference>
<dbReference type="PANTHER" id="PTHR11042:SF91">
    <property type="entry name" value="EUKARYOTIC TRANSLATION INITIATION FACTOR 2-ALPHA KINASE"/>
    <property type="match status" value="1"/>
</dbReference>
<dbReference type="PANTHER" id="PTHR11042">
    <property type="entry name" value="EUKARYOTIC TRANSLATION INITIATION FACTOR 2-ALPHA KINASE EIF2-ALPHA KINASE -RELATED"/>
    <property type="match status" value="1"/>
</dbReference>
<dbReference type="Pfam" id="PF00069">
    <property type="entry name" value="Pkinase"/>
    <property type="match status" value="2"/>
</dbReference>
<dbReference type="SMART" id="SM00564">
    <property type="entry name" value="PQQ"/>
    <property type="match status" value="2"/>
</dbReference>
<dbReference type="SMART" id="SM00220">
    <property type="entry name" value="S_TKc"/>
    <property type="match status" value="1"/>
</dbReference>
<dbReference type="SUPFAM" id="SSF56112">
    <property type="entry name" value="Protein kinase-like (PK-like)"/>
    <property type="match status" value="1"/>
</dbReference>
<dbReference type="SUPFAM" id="SSF50998">
    <property type="entry name" value="Quinoprotein alcohol dehydrogenase-like"/>
    <property type="match status" value="1"/>
</dbReference>
<dbReference type="PROSITE" id="PS00107">
    <property type="entry name" value="PROTEIN_KINASE_ATP"/>
    <property type="match status" value="1"/>
</dbReference>
<dbReference type="PROSITE" id="PS50011">
    <property type="entry name" value="PROTEIN_KINASE_DOM"/>
    <property type="match status" value="1"/>
</dbReference>
<dbReference type="PROSITE" id="PS00108">
    <property type="entry name" value="PROTEIN_KINASE_ST"/>
    <property type="match status" value="1"/>
</dbReference>
<feature type="signal peptide" evidence="2">
    <location>
        <begin position="1"/>
        <end position="39"/>
    </location>
</feature>
<feature type="chain" id="PRO_0000024326" description="Eukaryotic translation initiation factor 2-alpha kinase">
    <location>
        <begin position="40"/>
        <end position="1162"/>
    </location>
</feature>
<feature type="topological domain" description="Lumenal" evidence="2">
    <location>
        <begin position="40"/>
        <end position="537"/>
    </location>
</feature>
<feature type="transmembrane region" description="Helical" evidence="2">
    <location>
        <begin position="538"/>
        <end position="558"/>
    </location>
</feature>
<feature type="topological domain" description="Cytoplasmic" evidence="2">
    <location>
        <begin position="559"/>
        <end position="1162"/>
    </location>
</feature>
<feature type="domain" description="Protein kinase" evidence="3">
    <location>
        <begin position="642"/>
        <end position="1130"/>
    </location>
</feature>
<feature type="region of interest" description="Disordered" evidence="5">
    <location>
        <begin position="498"/>
        <end position="517"/>
    </location>
</feature>
<feature type="region of interest" description="Disordered" evidence="5">
    <location>
        <begin position="801"/>
        <end position="839"/>
    </location>
</feature>
<feature type="region of interest" description="Disordered" evidence="5">
    <location>
        <begin position="1135"/>
        <end position="1162"/>
    </location>
</feature>
<feature type="compositionally biased region" description="Polar residues" evidence="5">
    <location>
        <begin position="499"/>
        <end position="517"/>
    </location>
</feature>
<feature type="compositionally biased region" description="Acidic residues" evidence="5">
    <location>
        <begin position="813"/>
        <end position="828"/>
    </location>
</feature>
<feature type="compositionally biased region" description="Low complexity" evidence="5">
    <location>
        <begin position="1151"/>
        <end position="1162"/>
    </location>
</feature>
<feature type="active site" description="Proton acceptor" evidence="3 4">
    <location>
        <position position="980"/>
    </location>
</feature>
<feature type="binding site" evidence="3">
    <location>
        <begin position="648"/>
        <end position="656"/>
    </location>
    <ligand>
        <name>ATP</name>
        <dbReference type="ChEBI" id="CHEBI:30616"/>
    </ligand>
</feature>
<feature type="binding site" evidence="3">
    <location>
        <position position="671"/>
    </location>
    <ligand>
        <name>ATP</name>
        <dbReference type="ChEBI" id="CHEBI:30616"/>
    </ligand>
</feature>
<feature type="modified residue" description="Phosphoserine" evidence="6">
    <location>
        <position position="624"/>
    </location>
</feature>
<feature type="modified residue" description="Phosphoserine" evidence="6">
    <location>
        <position position="797"/>
    </location>
</feature>
<feature type="modified residue" description="Phosphothreonine" evidence="6">
    <location>
        <position position="818"/>
    </location>
</feature>
<feature type="modified residue" description="Phosphothreonine" evidence="6">
    <location>
        <position position="1028"/>
    </location>
</feature>
<feature type="glycosylation site" description="N-linked (GlcNAc...) asparagine" evidence="2">
    <location>
        <position position="193"/>
    </location>
</feature>
<feature type="glycosylation site" description="N-linked (GlcNAc...) asparagine" evidence="2">
    <location>
        <position position="260"/>
    </location>
</feature>
<feature type="glycosylation site" description="N-linked (GlcNAc...) asparagine" evidence="2">
    <location>
        <position position="353"/>
    </location>
</feature>
<feature type="glycosylation site" description="N-linked (GlcNAc...) asparagine" evidence="2">
    <location>
        <position position="461"/>
    </location>
</feature>
<feature type="glycosylation site" description="N-linked (GlcNAc...) asparagine" evidence="2">
    <location>
        <position position="505"/>
    </location>
</feature>
<feature type="glycosylation site" description="N-linked (GlcNAc...) asparagine" evidence="2">
    <location>
        <position position="516"/>
    </location>
</feature>
<feature type="sequence conflict" description="In Ref. 1; AAF61200." evidence="7" ref="1">
    <original>H</original>
    <variation>D</variation>
    <location>
        <position position="629"/>
    </location>
</feature>
<reference key="1">
    <citation type="journal article" date="2000" name="Biochem. J.">
        <title>Pancreatic eukaryotic initiation factor-2alpha kinase (PEK) homologues in humans, Drosophila melanogaster and Caenorhabditis elegans that mediate translational control in response to endoplasmic reticulum stress.</title>
        <authorList>
            <person name="Sood R."/>
            <person name="Porter A.C."/>
            <person name="Ma K."/>
            <person name="Quilliam L.A."/>
            <person name="Wek R.C."/>
        </authorList>
    </citation>
    <scope>NUCLEOTIDE SEQUENCE [MRNA]</scope>
    <scope>CHARACTERIZATION</scope>
</reference>
<reference key="2">
    <citation type="thesis" date="2001" institute="Universidad Autonoma de Madrid" country="Spain">
        <authorList>
            <person name="Pomar-Ballestero N."/>
        </authorList>
    </citation>
    <scope>NUCLEOTIDE SEQUENCE</scope>
</reference>
<reference key="3">
    <citation type="journal article" date="2000" name="Science">
        <title>The genome sequence of Drosophila melanogaster.</title>
        <authorList>
            <person name="Adams M.D."/>
            <person name="Celniker S.E."/>
            <person name="Holt R.A."/>
            <person name="Evans C.A."/>
            <person name="Gocayne J.D."/>
            <person name="Amanatides P.G."/>
            <person name="Scherer S.E."/>
            <person name="Li P.W."/>
            <person name="Hoskins R.A."/>
            <person name="Galle R.F."/>
            <person name="George R.A."/>
            <person name="Lewis S.E."/>
            <person name="Richards S."/>
            <person name="Ashburner M."/>
            <person name="Henderson S.N."/>
            <person name="Sutton G.G."/>
            <person name="Wortman J.R."/>
            <person name="Yandell M.D."/>
            <person name="Zhang Q."/>
            <person name="Chen L.X."/>
            <person name="Brandon R.C."/>
            <person name="Rogers Y.-H.C."/>
            <person name="Blazej R.G."/>
            <person name="Champe M."/>
            <person name="Pfeiffer B.D."/>
            <person name="Wan K.H."/>
            <person name="Doyle C."/>
            <person name="Baxter E.G."/>
            <person name="Helt G."/>
            <person name="Nelson C.R."/>
            <person name="Miklos G.L.G."/>
            <person name="Abril J.F."/>
            <person name="Agbayani A."/>
            <person name="An H.-J."/>
            <person name="Andrews-Pfannkoch C."/>
            <person name="Baldwin D."/>
            <person name="Ballew R.M."/>
            <person name="Basu A."/>
            <person name="Baxendale J."/>
            <person name="Bayraktaroglu L."/>
            <person name="Beasley E.M."/>
            <person name="Beeson K.Y."/>
            <person name="Benos P.V."/>
            <person name="Berman B.P."/>
            <person name="Bhandari D."/>
            <person name="Bolshakov S."/>
            <person name="Borkova D."/>
            <person name="Botchan M.R."/>
            <person name="Bouck J."/>
            <person name="Brokstein P."/>
            <person name="Brottier P."/>
            <person name="Burtis K.C."/>
            <person name="Busam D.A."/>
            <person name="Butler H."/>
            <person name="Cadieu E."/>
            <person name="Center A."/>
            <person name="Chandra I."/>
            <person name="Cherry J.M."/>
            <person name="Cawley S."/>
            <person name="Dahlke C."/>
            <person name="Davenport L.B."/>
            <person name="Davies P."/>
            <person name="de Pablos B."/>
            <person name="Delcher A."/>
            <person name="Deng Z."/>
            <person name="Mays A.D."/>
            <person name="Dew I."/>
            <person name="Dietz S.M."/>
            <person name="Dodson K."/>
            <person name="Doup L.E."/>
            <person name="Downes M."/>
            <person name="Dugan-Rocha S."/>
            <person name="Dunkov B.C."/>
            <person name="Dunn P."/>
            <person name="Durbin K.J."/>
            <person name="Evangelista C.C."/>
            <person name="Ferraz C."/>
            <person name="Ferriera S."/>
            <person name="Fleischmann W."/>
            <person name="Fosler C."/>
            <person name="Gabrielian A.E."/>
            <person name="Garg N.S."/>
            <person name="Gelbart W.M."/>
            <person name="Glasser K."/>
            <person name="Glodek A."/>
            <person name="Gong F."/>
            <person name="Gorrell J.H."/>
            <person name="Gu Z."/>
            <person name="Guan P."/>
            <person name="Harris M."/>
            <person name="Harris N.L."/>
            <person name="Harvey D.A."/>
            <person name="Heiman T.J."/>
            <person name="Hernandez J.R."/>
            <person name="Houck J."/>
            <person name="Hostin D."/>
            <person name="Houston K.A."/>
            <person name="Howland T.J."/>
            <person name="Wei M.-H."/>
            <person name="Ibegwam C."/>
            <person name="Jalali M."/>
            <person name="Kalush F."/>
            <person name="Karpen G.H."/>
            <person name="Ke Z."/>
            <person name="Kennison J.A."/>
            <person name="Ketchum K.A."/>
            <person name="Kimmel B.E."/>
            <person name="Kodira C.D."/>
            <person name="Kraft C.L."/>
            <person name="Kravitz S."/>
            <person name="Kulp D."/>
            <person name="Lai Z."/>
            <person name="Lasko P."/>
            <person name="Lei Y."/>
            <person name="Levitsky A.A."/>
            <person name="Li J.H."/>
            <person name="Li Z."/>
            <person name="Liang Y."/>
            <person name="Lin X."/>
            <person name="Liu X."/>
            <person name="Mattei B."/>
            <person name="McIntosh T.C."/>
            <person name="McLeod M.P."/>
            <person name="McPherson D."/>
            <person name="Merkulov G."/>
            <person name="Milshina N.V."/>
            <person name="Mobarry C."/>
            <person name="Morris J."/>
            <person name="Moshrefi A."/>
            <person name="Mount S.M."/>
            <person name="Moy M."/>
            <person name="Murphy B."/>
            <person name="Murphy L."/>
            <person name="Muzny D.M."/>
            <person name="Nelson D.L."/>
            <person name="Nelson D.R."/>
            <person name="Nelson K.A."/>
            <person name="Nixon K."/>
            <person name="Nusskern D.R."/>
            <person name="Pacleb J.M."/>
            <person name="Palazzolo M."/>
            <person name="Pittman G.S."/>
            <person name="Pan S."/>
            <person name="Pollard J."/>
            <person name="Puri V."/>
            <person name="Reese M.G."/>
            <person name="Reinert K."/>
            <person name="Remington K."/>
            <person name="Saunders R.D.C."/>
            <person name="Scheeler F."/>
            <person name="Shen H."/>
            <person name="Shue B.C."/>
            <person name="Siden-Kiamos I."/>
            <person name="Simpson M."/>
            <person name="Skupski M.P."/>
            <person name="Smith T.J."/>
            <person name="Spier E."/>
            <person name="Spradling A.C."/>
            <person name="Stapleton M."/>
            <person name="Strong R."/>
            <person name="Sun E."/>
            <person name="Svirskas R."/>
            <person name="Tector C."/>
            <person name="Turner R."/>
            <person name="Venter E."/>
            <person name="Wang A.H."/>
            <person name="Wang X."/>
            <person name="Wang Z.-Y."/>
            <person name="Wassarman D.A."/>
            <person name="Weinstock G.M."/>
            <person name="Weissenbach J."/>
            <person name="Williams S.M."/>
            <person name="Woodage T."/>
            <person name="Worley K.C."/>
            <person name="Wu D."/>
            <person name="Yang S."/>
            <person name="Yao Q.A."/>
            <person name="Ye J."/>
            <person name="Yeh R.-F."/>
            <person name="Zaveri J.S."/>
            <person name="Zhan M."/>
            <person name="Zhang G."/>
            <person name="Zhao Q."/>
            <person name="Zheng L."/>
            <person name="Zheng X.H."/>
            <person name="Zhong F.N."/>
            <person name="Zhong W."/>
            <person name="Zhou X."/>
            <person name="Zhu S.C."/>
            <person name="Zhu X."/>
            <person name="Smith H.O."/>
            <person name="Gibbs R.A."/>
            <person name="Myers E.W."/>
            <person name="Rubin G.M."/>
            <person name="Venter J.C."/>
        </authorList>
    </citation>
    <scope>NUCLEOTIDE SEQUENCE [LARGE SCALE GENOMIC DNA]</scope>
    <source>
        <strain>Berkeley</strain>
    </source>
</reference>
<reference key="4">
    <citation type="journal article" date="2002" name="Genome Biol.">
        <title>Annotation of the Drosophila melanogaster euchromatic genome: a systematic review.</title>
        <authorList>
            <person name="Misra S."/>
            <person name="Crosby M.A."/>
            <person name="Mungall C.J."/>
            <person name="Matthews B.B."/>
            <person name="Campbell K.S."/>
            <person name="Hradecky P."/>
            <person name="Huang Y."/>
            <person name="Kaminker J.S."/>
            <person name="Millburn G.H."/>
            <person name="Prochnik S.E."/>
            <person name="Smith C.D."/>
            <person name="Tupy J.L."/>
            <person name="Whitfield E.J."/>
            <person name="Bayraktaroglu L."/>
            <person name="Berman B.P."/>
            <person name="Bettencourt B.R."/>
            <person name="Celniker S.E."/>
            <person name="de Grey A.D.N.J."/>
            <person name="Drysdale R.A."/>
            <person name="Harris N.L."/>
            <person name="Richter J."/>
            <person name="Russo S."/>
            <person name="Schroeder A.J."/>
            <person name="Shu S.Q."/>
            <person name="Stapleton M."/>
            <person name="Yamada C."/>
            <person name="Ashburner M."/>
            <person name="Gelbart W.M."/>
            <person name="Rubin G.M."/>
            <person name="Lewis S.E."/>
        </authorList>
    </citation>
    <scope>GENOME REANNOTATION</scope>
    <source>
        <strain>Berkeley</strain>
    </source>
</reference>
<reference key="5">
    <citation type="journal article" date="2002" name="Genome Biol.">
        <title>A Drosophila full-length cDNA resource.</title>
        <authorList>
            <person name="Stapleton M."/>
            <person name="Carlson J.W."/>
            <person name="Brokstein P."/>
            <person name="Yu C."/>
            <person name="Champe M."/>
            <person name="George R.A."/>
            <person name="Guarin H."/>
            <person name="Kronmiller B."/>
            <person name="Pacleb J.M."/>
            <person name="Park S."/>
            <person name="Wan K.H."/>
            <person name="Rubin G.M."/>
            <person name="Celniker S.E."/>
        </authorList>
    </citation>
    <scope>NUCLEOTIDE SEQUENCE [LARGE SCALE MRNA]</scope>
    <source>
        <strain>Berkeley</strain>
        <tissue>Embryo</tissue>
    </source>
</reference>
<reference key="6">
    <citation type="journal article" date="2008" name="J. Proteome Res.">
        <title>Phosphoproteome analysis of Drosophila melanogaster embryos.</title>
        <authorList>
            <person name="Zhai B."/>
            <person name="Villen J."/>
            <person name="Beausoleil S.A."/>
            <person name="Mintseris J."/>
            <person name="Gygi S.P."/>
        </authorList>
    </citation>
    <scope>PHOSPHORYLATION [LARGE SCALE ANALYSIS] AT SER-624; SER-797; THR-818 AND THR-1028</scope>
    <scope>IDENTIFICATION BY MASS SPECTROMETRY</scope>
    <source>
        <tissue>Embryo</tissue>
    </source>
</reference>
<comment type="function">
    <text evidence="1">Phosphorylates the alpha subunit of eukaryotic translation-initiation factor 2 (EIF2), leading to its inactivation and thus to a rapid reduction of translational initiation and repression of global protein synthesis.</text>
</comment>
<comment type="catalytic activity">
    <reaction>
        <text>L-seryl-[protein] + ATP = O-phospho-L-seryl-[protein] + ADP + H(+)</text>
        <dbReference type="Rhea" id="RHEA:17989"/>
        <dbReference type="Rhea" id="RHEA-COMP:9863"/>
        <dbReference type="Rhea" id="RHEA-COMP:11604"/>
        <dbReference type="ChEBI" id="CHEBI:15378"/>
        <dbReference type="ChEBI" id="CHEBI:29999"/>
        <dbReference type="ChEBI" id="CHEBI:30616"/>
        <dbReference type="ChEBI" id="CHEBI:83421"/>
        <dbReference type="ChEBI" id="CHEBI:456216"/>
        <dbReference type="EC" id="2.7.11.1"/>
    </reaction>
</comment>
<comment type="catalytic activity">
    <reaction>
        <text>L-threonyl-[protein] + ATP = O-phospho-L-threonyl-[protein] + ADP + H(+)</text>
        <dbReference type="Rhea" id="RHEA:46608"/>
        <dbReference type="Rhea" id="RHEA-COMP:11060"/>
        <dbReference type="Rhea" id="RHEA-COMP:11605"/>
        <dbReference type="ChEBI" id="CHEBI:15378"/>
        <dbReference type="ChEBI" id="CHEBI:30013"/>
        <dbReference type="ChEBI" id="CHEBI:30616"/>
        <dbReference type="ChEBI" id="CHEBI:61977"/>
        <dbReference type="ChEBI" id="CHEBI:456216"/>
        <dbReference type="EC" id="2.7.11.1"/>
    </reaction>
</comment>
<comment type="activity regulation">
    <text evidence="1">Perturbation in protein folding in the endoplasmic reticulum (ER) promotes reversible dissociation from HSPA5/BIP and oligomerization, resulting in transautophosphorylation and kinase activity induction.</text>
</comment>
<comment type="subunit">
    <text evidence="1">Forms dimers with HSPA5/BIP in resting cells. Oligomerizes in ER-stressed cells (By similarity).</text>
</comment>
<comment type="subcellular location">
    <subcellularLocation>
        <location evidence="1">Endoplasmic reticulum membrane</location>
        <topology evidence="1">Single-pass type I membrane protein</topology>
    </subcellularLocation>
</comment>
<comment type="induction">
    <text>By ER stress.</text>
</comment>
<comment type="domain">
    <text evidence="1">The lumenal domain senses perturbations in protein folding in the ER, probably through reversible interaction with HSPA5/BIP.</text>
</comment>
<comment type="PTM">
    <text evidence="1">Autophosphorylated.</text>
</comment>
<comment type="PTM">
    <text evidence="1">N-glycosylated.</text>
</comment>
<comment type="similarity">
    <text evidence="3">Belongs to the protein kinase superfamily. Ser/Thr protein kinase family. GCN2 subfamily.</text>
</comment>